<organism>
    <name type="scientific">Rickettsia typhi (strain ATCC VR-144 / Wilmington)</name>
    <dbReference type="NCBI Taxonomy" id="257363"/>
    <lineage>
        <taxon>Bacteria</taxon>
        <taxon>Pseudomonadati</taxon>
        <taxon>Pseudomonadota</taxon>
        <taxon>Alphaproteobacteria</taxon>
        <taxon>Rickettsiales</taxon>
        <taxon>Rickettsiaceae</taxon>
        <taxon>Rickettsieae</taxon>
        <taxon>Rickettsia</taxon>
        <taxon>typhus group</taxon>
    </lineage>
</organism>
<reference key="1">
    <citation type="journal article" date="2004" name="J. Bacteriol.">
        <title>Complete genome sequence of Rickettsia typhi and comparison with sequences of other Rickettsiae.</title>
        <authorList>
            <person name="McLeod M.P."/>
            <person name="Qin X."/>
            <person name="Karpathy S.E."/>
            <person name="Gioia J."/>
            <person name="Highlander S.K."/>
            <person name="Fox G.E."/>
            <person name="McNeill T.Z."/>
            <person name="Jiang H."/>
            <person name="Muzny D."/>
            <person name="Jacob L.S."/>
            <person name="Hawes A.C."/>
            <person name="Sodergren E."/>
            <person name="Gill R."/>
            <person name="Hume J."/>
            <person name="Morgan M."/>
            <person name="Fan G."/>
            <person name="Amin A.G."/>
            <person name="Gibbs R.A."/>
            <person name="Hong C."/>
            <person name="Yu X.-J."/>
            <person name="Walker D.H."/>
            <person name="Weinstock G.M."/>
        </authorList>
    </citation>
    <scope>NUCLEOTIDE SEQUENCE [LARGE SCALE GENOMIC DNA]</scope>
    <source>
        <strain>ATCC VR-144 / Wilmington</strain>
    </source>
</reference>
<protein>
    <recommendedName>
        <fullName evidence="1">Peptide deformylase</fullName>
        <shortName evidence="1">PDF</shortName>
        <ecNumber evidence="1">3.5.1.88</ecNumber>
    </recommendedName>
    <alternativeName>
        <fullName evidence="1">Polypeptide deformylase</fullName>
    </alternativeName>
</protein>
<gene>
    <name evidence="1" type="primary">def</name>
    <name type="ordered locus">RT0197</name>
</gene>
<accession>Q68XG1</accession>
<dbReference type="EC" id="3.5.1.88" evidence="1"/>
<dbReference type="EMBL" id="AE017197">
    <property type="protein sequence ID" value="AAU03681.1"/>
    <property type="molecule type" value="Genomic_DNA"/>
</dbReference>
<dbReference type="RefSeq" id="WP_011190668.1">
    <property type="nucleotide sequence ID" value="NC_006142.1"/>
</dbReference>
<dbReference type="SMR" id="Q68XG1"/>
<dbReference type="KEGG" id="rty:RT0197"/>
<dbReference type="eggNOG" id="COG0242">
    <property type="taxonomic scope" value="Bacteria"/>
</dbReference>
<dbReference type="HOGENOM" id="CLU_061901_2_2_5"/>
<dbReference type="OrthoDB" id="9804313at2"/>
<dbReference type="Proteomes" id="UP000000604">
    <property type="component" value="Chromosome"/>
</dbReference>
<dbReference type="GO" id="GO:0046872">
    <property type="term" value="F:metal ion binding"/>
    <property type="evidence" value="ECO:0007669"/>
    <property type="project" value="UniProtKB-KW"/>
</dbReference>
<dbReference type="GO" id="GO:0042586">
    <property type="term" value="F:peptide deformylase activity"/>
    <property type="evidence" value="ECO:0007669"/>
    <property type="project" value="UniProtKB-UniRule"/>
</dbReference>
<dbReference type="GO" id="GO:0006412">
    <property type="term" value="P:translation"/>
    <property type="evidence" value="ECO:0007669"/>
    <property type="project" value="UniProtKB-UniRule"/>
</dbReference>
<dbReference type="CDD" id="cd00487">
    <property type="entry name" value="Pep_deformylase"/>
    <property type="match status" value="1"/>
</dbReference>
<dbReference type="FunFam" id="3.90.45.10:FF:000005">
    <property type="entry name" value="Peptide deformylase"/>
    <property type="match status" value="1"/>
</dbReference>
<dbReference type="Gene3D" id="3.90.45.10">
    <property type="entry name" value="Peptide deformylase"/>
    <property type="match status" value="1"/>
</dbReference>
<dbReference type="HAMAP" id="MF_00163">
    <property type="entry name" value="Pep_deformylase"/>
    <property type="match status" value="1"/>
</dbReference>
<dbReference type="InterPro" id="IPR023635">
    <property type="entry name" value="Peptide_deformylase"/>
</dbReference>
<dbReference type="InterPro" id="IPR036821">
    <property type="entry name" value="Peptide_deformylase_sf"/>
</dbReference>
<dbReference type="NCBIfam" id="TIGR00079">
    <property type="entry name" value="pept_deformyl"/>
    <property type="match status" value="1"/>
</dbReference>
<dbReference type="NCBIfam" id="NF001159">
    <property type="entry name" value="PRK00150.1-3"/>
    <property type="match status" value="1"/>
</dbReference>
<dbReference type="PANTHER" id="PTHR10458">
    <property type="entry name" value="PEPTIDE DEFORMYLASE"/>
    <property type="match status" value="1"/>
</dbReference>
<dbReference type="PANTHER" id="PTHR10458:SF22">
    <property type="entry name" value="PEPTIDE DEFORMYLASE"/>
    <property type="match status" value="1"/>
</dbReference>
<dbReference type="Pfam" id="PF01327">
    <property type="entry name" value="Pep_deformylase"/>
    <property type="match status" value="1"/>
</dbReference>
<dbReference type="PIRSF" id="PIRSF004749">
    <property type="entry name" value="Pep_def"/>
    <property type="match status" value="1"/>
</dbReference>
<dbReference type="PRINTS" id="PR01576">
    <property type="entry name" value="PDEFORMYLASE"/>
</dbReference>
<dbReference type="SUPFAM" id="SSF56420">
    <property type="entry name" value="Peptide deformylase"/>
    <property type="match status" value="1"/>
</dbReference>
<evidence type="ECO:0000255" key="1">
    <source>
        <dbReference type="HAMAP-Rule" id="MF_00163"/>
    </source>
</evidence>
<keyword id="KW-0378">Hydrolase</keyword>
<keyword id="KW-0408">Iron</keyword>
<keyword id="KW-0479">Metal-binding</keyword>
<keyword id="KW-0648">Protein biosynthesis</keyword>
<proteinExistence type="inferred from homology"/>
<feature type="chain" id="PRO_0000301091" description="Peptide deformylase">
    <location>
        <begin position="1"/>
        <end position="175"/>
    </location>
</feature>
<feature type="active site" evidence="1">
    <location>
        <position position="142"/>
    </location>
</feature>
<feature type="binding site" evidence="1">
    <location>
        <position position="99"/>
    </location>
    <ligand>
        <name>Fe cation</name>
        <dbReference type="ChEBI" id="CHEBI:24875"/>
    </ligand>
</feature>
<feature type="binding site" evidence="1">
    <location>
        <position position="141"/>
    </location>
    <ligand>
        <name>Fe cation</name>
        <dbReference type="ChEBI" id="CHEBI:24875"/>
    </ligand>
</feature>
<feature type="binding site" evidence="1">
    <location>
        <position position="145"/>
    </location>
    <ligand>
        <name>Fe cation</name>
        <dbReference type="ChEBI" id="CHEBI:24875"/>
    </ligand>
</feature>
<sequence>MSIYSIVTAPDERLKQKSKPVLECTDQTRKFMHDMLETMYNANGAGLAAVQVGVLQRILVIDIKAHDPVERPKDFYPLFIVNPEIIEQSTELVTANEGCISLPEQRIEVMRPESVKIRYLDYHGKSQELKANDWLARVIQHEYDHLEGKLMVDYLSNLKRDVVLRKLKKLKNNIV</sequence>
<comment type="function">
    <text evidence="1">Removes the formyl group from the N-terminal Met of newly synthesized proteins. Requires at least a dipeptide for an efficient rate of reaction. N-terminal L-methionine is a prerequisite for activity but the enzyme has broad specificity at other positions.</text>
</comment>
<comment type="catalytic activity">
    <reaction evidence="1">
        <text>N-terminal N-formyl-L-methionyl-[peptide] + H2O = N-terminal L-methionyl-[peptide] + formate</text>
        <dbReference type="Rhea" id="RHEA:24420"/>
        <dbReference type="Rhea" id="RHEA-COMP:10639"/>
        <dbReference type="Rhea" id="RHEA-COMP:10640"/>
        <dbReference type="ChEBI" id="CHEBI:15377"/>
        <dbReference type="ChEBI" id="CHEBI:15740"/>
        <dbReference type="ChEBI" id="CHEBI:49298"/>
        <dbReference type="ChEBI" id="CHEBI:64731"/>
        <dbReference type="EC" id="3.5.1.88"/>
    </reaction>
</comment>
<comment type="cofactor">
    <cofactor evidence="1">
        <name>Fe(2+)</name>
        <dbReference type="ChEBI" id="CHEBI:29033"/>
    </cofactor>
    <text evidence="1">Binds 1 Fe(2+) ion.</text>
</comment>
<comment type="similarity">
    <text evidence="1">Belongs to the polypeptide deformylase family.</text>
</comment>
<name>DEF_RICTY</name>